<sequence>MKPAIATISRQALRHNIQLIKKLAPKQKLLAMIKANAYGQGLLPAAATLADLVDGFGVARLHEALEVQETGYTGKILLVEGFFDREELLKTLSRGFDTVIHCLEQLELLEQVAKEWQIEQQKRFWQRKTKIYFPINIWLKIDTGMHRLGIHPEQVDLFYARLKSCPLVATISFMSHFSRADELDCGYTEQQIATFEMATEQYSAHSRSIAASSGILYWPQAHYEWVRPGIIMHGISPHYQPITQLGFKPVMTLSSTLIAIRSHKAGEPVGYGGAWISDKATTLGVVAMGYGDGYPRNAPEGTPVLINGRIVPIVGRVSMDMLTVDLGIDSQDQVGDEVILWGNDLLIETVAQHIGVISYELITKLTPRVIFEYR</sequence>
<proteinExistence type="inferred from homology"/>
<name>ALR_HAEDU</name>
<reference key="1">
    <citation type="submission" date="2003-06" db="EMBL/GenBank/DDBJ databases">
        <title>The complete genome sequence of Haemophilus ducreyi.</title>
        <authorList>
            <person name="Munson R.S. Jr."/>
            <person name="Ray W.C."/>
            <person name="Mahairas G."/>
            <person name="Sabo P."/>
            <person name="Mungur R."/>
            <person name="Johnson L."/>
            <person name="Nguyen D."/>
            <person name="Wang J."/>
            <person name="Forst C."/>
            <person name="Hood L."/>
        </authorList>
    </citation>
    <scope>NUCLEOTIDE SEQUENCE [LARGE SCALE GENOMIC DNA]</scope>
    <source>
        <strain>35000HP / ATCC 700724</strain>
    </source>
</reference>
<comment type="function">
    <text evidence="1">Catalyzes the interconversion of L-alanine and D-alanine. May also act on other amino acids.</text>
</comment>
<comment type="catalytic activity">
    <reaction evidence="1">
        <text>L-alanine = D-alanine</text>
        <dbReference type="Rhea" id="RHEA:20249"/>
        <dbReference type="ChEBI" id="CHEBI:57416"/>
        <dbReference type="ChEBI" id="CHEBI:57972"/>
        <dbReference type="EC" id="5.1.1.1"/>
    </reaction>
</comment>
<comment type="cofactor">
    <cofactor evidence="1">
        <name>pyridoxal 5'-phosphate</name>
        <dbReference type="ChEBI" id="CHEBI:597326"/>
    </cofactor>
</comment>
<comment type="pathway">
    <text evidence="1">Amino-acid biosynthesis; D-alanine biosynthesis; D-alanine from L-alanine: step 1/1.</text>
</comment>
<comment type="similarity">
    <text evidence="1">Belongs to the alanine racemase family.</text>
</comment>
<protein>
    <recommendedName>
        <fullName evidence="1">Alanine racemase</fullName>
        <ecNumber evidence="1">5.1.1.1</ecNumber>
    </recommendedName>
</protein>
<dbReference type="EC" id="5.1.1.1" evidence="1"/>
<dbReference type="EMBL" id="AE017143">
    <property type="protein sequence ID" value="AAP95551.1"/>
    <property type="molecule type" value="Genomic_DNA"/>
</dbReference>
<dbReference type="RefSeq" id="WP_010944604.1">
    <property type="nucleotide sequence ID" value="NC_002940.2"/>
</dbReference>
<dbReference type="SMR" id="Q7VNC9"/>
<dbReference type="STRING" id="233412.HD_0624"/>
<dbReference type="KEGG" id="hdu:HD_0624"/>
<dbReference type="eggNOG" id="COG0787">
    <property type="taxonomic scope" value="Bacteria"/>
</dbReference>
<dbReference type="HOGENOM" id="CLU_028393_1_0_6"/>
<dbReference type="OrthoDB" id="9813814at2"/>
<dbReference type="UniPathway" id="UPA00042">
    <property type="reaction ID" value="UER00497"/>
</dbReference>
<dbReference type="Proteomes" id="UP000001022">
    <property type="component" value="Chromosome"/>
</dbReference>
<dbReference type="GO" id="GO:0005829">
    <property type="term" value="C:cytosol"/>
    <property type="evidence" value="ECO:0007669"/>
    <property type="project" value="TreeGrafter"/>
</dbReference>
<dbReference type="GO" id="GO:0008784">
    <property type="term" value="F:alanine racemase activity"/>
    <property type="evidence" value="ECO:0007669"/>
    <property type="project" value="UniProtKB-UniRule"/>
</dbReference>
<dbReference type="GO" id="GO:0030170">
    <property type="term" value="F:pyridoxal phosphate binding"/>
    <property type="evidence" value="ECO:0007669"/>
    <property type="project" value="UniProtKB-UniRule"/>
</dbReference>
<dbReference type="GO" id="GO:0030632">
    <property type="term" value="P:D-alanine biosynthetic process"/>
    <property type="evidence" value="ECO:0007669"/>
    <property type="project" value="UniProtKB-UniRule"/>
</dbReference>
<dbReference type="CDD" id="cd06827">
    <property type="entry name" value="PLPDE_III_AR_proteobact"/>
    <property type="match status" value="1"/>
</dbReference>
<dbReference type="FunFam" id="2.40.37.10:FF:000002">
    <property type="entry name" value="Alanine racemase"/>
    <property type="match status" value="1"/>
</dbReference>
<dbReference type="FunFam" id="3.20.20.10:FF:000002">
    <property type="entry name" value="Alanine racemase"/>
    <property type="match status" value="1"/>
</dbReference>
<dbReference type="Gene3D" id="3.20.20.10">
    <property type="entry name" value="Alanine racemase"/>
    <property type="match status" value="1"/>
</dbReference>
<dbReference type="Gene3D" id="2.40.37.10">
    <property type="entry name" value="Lyase, Ornithine Decarboxylase, Chain A, domain 1"/>
    <property type="match status" value="1"/>
</dbReference>
<dbReference type="HAMAP" id="MF_01201">
    <property type="entry name" value="Ala_racemase"/>
    <property type="match status" value="1"/>
</dbReference>
<dbReference type="InterPro" id="IPR000821">
    <property type="entry name" value="Ala_racemase"/>
</dbReference>
<dbReference type="InterPro" id="IPR009006">
    <property type="entry name" value="Ala_racemase/Decarboxylase_C"/>
</dbReference>
<dbReference type="InterPro" id="IPR011079">
    <property type="entry name" value="Ala_racemase_C"/>
</dbReference>
<dbReference type="InterPro" id="IPR001608">
    <property type="entry name" value="Ala_racemase_N"/>
</dbReference>
<dbReference type="InterPro" id="IPR029066">
    <property type="entry name" value="PLP-binding_barrel"/>
</dbReference>
<dbReference type="NCBIfam" id="TIGR00492">
    <property type="entry name" value="alr"/>
    <property type="match status" value="1"/>
</dbReference>
<dbReference type="PANTHER" id="PTHR30511">
    <property type="entry name" value="ALANINE RACEMASE"/>
    <property type="match status" value="1"/>
</dbReference>
<dbReference type="PANTHER" id="PTHR30511:SF4">
    <property type="entry name" value="ALANINE RACEMASE, BIOSYNTHETIC"/>
    <property type="match status" value="1"/>
</dbReference>
<dbReference type="Pfam" id="PF00842">
    <property type="entry name" value="Ala_racemase_C"/>
    <property type="match status" value="1"/>
</dbReference>
<dbReference type="Pfam" id="PF01168">
    <property type="entry name" value="Ala_racemase_N"/>
    <property type="match status" value="1"/>
</dbReference>
<dbReference type="PRINTS" id="PR00992">
    <property type="entry name" value="ALARACEMASE"/>
</dbReference>
<dbReference type="SMART" id="SM01005">
    <property type="entry name" value="Ala_racemase_C"/>
    <property type="match status" value="1"/>
</dbReference>
<dbReference type="SUPFAM" id="SSF50621">
    <property type="entry name" value="Alanine racemase C-terminal domain-like"/>
    <property type="match status" value="1"/>
</dbReference>
<dbReference type="SUPFAM" id="SSF51419">
    <property type="entry name" value="PLP-binding barrel"/>
    <property type="match status" value="1"/>
</dbReference>
<gene>
    <name type="primary">alr</name>
    <name type="ordered locus">HD_0624</name>
</gene>
<feature type="chain" id="PRO_0000114521" description="Alanine racemase">
    <location>
        <begin position="1"/>
        <end position="374"/>
    </location>
</feature>
<feature type="active site" description="Proton acceptor; specific for D-alanine" evidence="1">
    <location>
        <position position="34"/>
    </location>
</feature>
<feature type="active site" description="Proton acceptor; specific for L-alanine" evidence="1">
    <location>
        <position position="271"/>
    </location>
</feature>
<feature type="binding site" evidence="1">
    <location>
        <position position="147"/>
    </location>
    <ligand>
        <name>substrate</name>
    </ligand>
</feature>
<feature type="binding site" evidence="1">
    <location>
        <position position="319"/>
    </location>
    <ligand>
        <name>substrate</name>
    </ligand>
</feature>
<feature type="modified residue" description="N6-(pyridoxal phosphate)lysine" evidence="1">
    <location>
        <position position="34"/>
    </location>
</feature>
<accession>Q7VNC9</accession>
<organism>
    <name type="scientific">Haemophilus ducreyi (strain 35000HP / ATCC 700724)</name>
    <dbReference type="NCBI Taxonomy" id="233412"/>
    <lineage>
        <taxon>Bacteria</taxon>
        <taxon>Pseudomonadati</taxon>
        <taxon>Pseudomonadota</taxon>
        <taxon>Gammaproteobacteria</taxon>
        <taxon>Pasteurellales</taxon>
        <taxon>Pasteurellaceae</taxon>
        <taxon>Haemophilus</taxon>
    </lineage>
</organism>
<keyword id="KW-0413">Isomerase</keyword>
<keyword id="KW-0663">Pyridoxal phosphate</keyword>
<keyword id="KW-1185">Reference proteome</keyword>
<evidence type="ECO:0000255" key="1">
    <source>
        <dbReference type="HAMAP-Rule" id="MF_01201"/>
    </source>
</evidence>